<name>DCDA_ZYMMO</name>
<protein>
    <recommendedName>
        <fullName evidence="2">Diaminopimelate decarboxylase</fullName>
        <shortName evidence="2">DAP decarboxylase</shortName>
        <shortName evidence="2">DAPDC</shortName>
        <ecNumber evidence="2">4.1.1.20</ecNumber>
    </recommendedName>
</protein>
<gene>
    <name evidence="2" type="primary">lysA</name>
    <name type="ordered locus">ZMO1768</name>
</gene>
<evidence type="ECO:0000255" key="1"/>
<evidence type="ECO:0000255" key="2">
    <source>
        <dbReference type="HAMAP-Rule" id="MF_02120"/>
    </source>
</evidence>
<sequence>MIPFSLKNGTLCVEDIPLPEIAAQYGTPCYVYSHSYLTERARRFTKALDGAGKGKSLVAFAVKANPSQAILASFAKEGLGADVVSAGEIRRAVHAGIPPERIVFSGVGKTAEEMRYALEIGIGQFNIESVSEIEMLAEVATSLGKKAAVALRINPDVDPHTHAKIATGKADTKFGIAAEDALSAYEKLASYPSLKIQGIASHIGSQITDLAPFEAAAERIYEIITALEKAGHAIETADLGGGLGVRYKDDQPEPPSVEAYGEMIKRVTKGWNCRLIFEPGRSLIANAGVLLSKVIRIKESKTARFVILDAAMNDLVRPTLYDAYHEIKAVTPSAQTYQADIVGPVCETGDIFARNRSISAVKADDLMAIMSAGAYGATMASAYNSRPLVAEVMVSGNKSALIRKRQSVEDLMRDEQKVEWL</sequence>
<organism>
    <name type="scientific">Zymomonas mobilis subsp. mobilis (strain ATCC 31821 / ZM4 / CP4)</name>
    <dbReference type="NCBI Taxonomy" id="264203"/>
    <lineage>
        <taxon>Bacteria</taxon>
        <taxon>Pseudomonadati</taxon>
        <taxon>Pseudomonadota</taxon>
        <taxon>Alphaproteobacteria</taxon>
        <taxon>Sphingomonadales</taxon>
        <taxon>Zymomonadaceae</taxon>
        <taxon>Zymomonas</taxon>
    </lineage>
</organism>
<feature type="chain" id="PRO_0000149939" description="Diaminopimelate decarboxylase">
    <location>
        <begin position="1"/>
        <end position="421"/>
    </location>
</feature>
<feature type="active site" description="Proton donor" evidence="1">
    <location>
        <position position="346"/>
    </location>
</feature>
<feature type="binding site" evidence="2">
    <location>
        <position position="242"/>
    </location>
    <ligand>
        <name>pyridoxal 5'-phosphate</name>
        <dbReference type="ChEBI" id="CHEBI:597326"/>
    </ligand>
</feature>
<feature type="binding site" evidence="2">
    <location>
        <begin position="278"/>
        <end position="281"/>
    </location>
    <ligand>
        <name>pyridoxal 5'-phosphate</name>
        <dbReference type="ChEBI" id="CHEBI:597326"/>
    </ligand>
</feature>
<feature type="binding site" evidence="2">
    <location>
        <position position="281"/>
    </location>
    <ligand>
        <name>substrate</name>
    </ligand>
</feature>
<feature type="binding site" evidence="2">
    <location>
        <position position="317"/>
    </location>
    <ligand>
        <name>substrate</name>
    </ligand>
</feature>
<feature type="binding site" evidence="2">
    <location>
        <position position="321"/>
    </location>
    <ligand>
        <name>substrate</name>
    </ligand>
</feature>
<feature type="binding site" evidence="2">
    <location>
        <position position="347"/>
    </location>
    <ligand>
        <name>substrate</name>
    </ligand>
</feature>
<feature type="binding site" evidence="2">
    <location>
        <position position="375"/>
    </location>
    <ligand>
        <name>pyridoxal 5'-phosphate</name>
        <dbReference type="ChEBI" id="CHEBI:597326"/>
    </ligand>
</feature>
<feature type="binding site" evidence="2">
    <location>
        <position position="375"/>
    </location>
    <ligand>
        <name>substrate</name>
    </ligand>
</feature>
<feature type="modified residue" description="N6-(pyridoxal phosphate)lysine" evidence="2">
    <location>
        <position position="63"/>
    </location>
</feature>
<keyword id="KW-0028">Amino-acid biosynthesis</keyword>
<keyword id="KW-0210">Decarboxylase</keyword>
<keyword id="KW-0456">Lyase</keyword>
<keyword id="KW-0457">Lysine biosynthesis</keyword>
<keyword id="KW-0663">Pyridoxal phosphate</keyword>
<keyword id="KW-1185">Reference proteome</keyword>
<accession>Q9Z661</accession>
<accession>Q5NLL8</accession>
<dbReference type="EC" id="4.1.1.20" evidence="2"/>
<dbReference type="EMBL" id="AF102543">
    <property type="protein sequence ID" value="AAD19416.1"/>
    <property type="molecule type" value="Genomic_DNA"/>
</dbReference>
<dbReference type="EMBL" id="AE008692">
    <property type="protein sequence ID" value="AAV90392.1"/>
    <property type="molecule type" value="Genomic_DNA"/>
</dbReference>
<dbReference type="RefSeq" id="WP_011241508.1">
    <property type="nucleotide sequence ID" value="NZ_CP035711.1"/>
</dbReference>
<dbReference type="SMR" id="Q9Z661"/>
<dbReference type="STRING" id="264203.ZMO1768"/>
<dbReference type="KEGG" id="zmo:ZMO1768"/>
<dbReference type="eggNOG" id="COG0019">
    <property type="taxonomic scope" value="Bacteria"/>
</dbReference>
<dbReference type="HOGENOM" id="CLU_026444_0_0_5"/>
<dbReference type="UniPathway" id="UPA00034">
    <property type="reaction ID" value="UER00027"/>
</dbReference>
<dbReference type="Proteomes" id="UP000001173">
    <property type="component" value="Chromosome"/>
</dbReference>
<dbReference type="GO" id="GO:0008836">
    <property type="term" value="F:diaminopimelate decarboxylase activity"/>
    <property type="evidence" value="ECO:0007669"/>
    <property type="project" value="UniProtKB-UniRule"/>
</dbReference>
<dbReference type="GO" id="GO:0030170">
    <property type="term" value="F:pyridoxal phosphate binding"/>
    <property type="evidence" value="ECO:0007669"/>
    <property type="project" value="UniProtKB-UniRule"/>
</dbReference>
<dbReference type="GO" id="GO:0009089">
    <property type="term" value="P:lysine biosynthetic process via diaminopimelate"/>
    <property type="evidence" value="ECO:0007669"/>
    <property type="project" value="UniProtKB-UniRule"/>
</dbReference>
<dbReference type="CDD" id="cd06828">
    <property type="entry name" value="PLPDE_III_DapDC"/>
    <property type="match status" value="1"/>
</dbReference>
<dbReference type="FunFam" id="3.20.20.10:FF:000003">
    <property type="entry name" value="Diaminopimelate decarboxylase"/>
    <property type="match status" value="1"/>
</dbReference>
<dbReference type="Gene3D" id="3.20.20.10">
    <property type="entry name" value="Alanine racemase"/>
    <property type="match status" value="1"/>
</dbReference>
<dbReference type="Gene3D" id="2.40.37.10">
    <property type="entry name" value="Lyase, Ornithine Decarboxylase, Chain A, domain 1"/>
    <property type="match status" value="1"/>
</dbReference>
<dbReference type="HAMAP" id="MF_02120">
    <property type="entry name" value="LysA"/>
    <property type="match status" value="1"/>
</dbReference>
<dbReference type="InterPro" id="IPR009006">
    <property type="entry name" value="Ala_racemase/Decarboxylase_C"/>
</dbReference>
<dbReference type="InterPro" id="IPR002986">
    <property type="entry name" value="DAP_deCOOHase_LysA"/>
</dbReference>
<dbReference type="InterPro" id="IPR022643">
    <property type="entry name" value="De-COase2_C"/>
</dbReference>
<dbReference type="InterPro" id="IPR022644">
    <property type="entry name" value="De-COase2_N"/>
</dbReference>
<dbReference type="InterPro" id="IPR000183">
    <property type="entry name" value="Orn/DAP/Arg_de-COase"/>
</dbReference>
<dbReference type="InterPro" id="IPR029066">
    <property type="entry name" value="PLP-binding_barrel"/>
</dbReference>
<dbReference type="NCBIfam" id="TIGR01048">
    <property type="entry name" value="lysA"/>
    <property type="match status" value="1"/>
</dbReference>
<dbReference type="PANTHER" id="PTHR43727">
    <property type="entry name" value="DIAMINOPIMELATE DECARBOXYLASE"/>
    <property type="match status" value="1"/>
</dbReference>
<dbReference type="PANTHER" id="PTHR43727:SF2">
    <property type="entry name" value="GROUP IV DECARBOXYLASE"/>
    <property type="match status" value="1"/>
</dbReference>
<dbReference type="Pfam" id="PF02784">
    <property type="entry name" value="Orn_Arg_deC_N"/>
    <property type="match status" value="1"/>
</dbReference>
<dbReference type="Pfam" id="PF00278">
    <property type="entry name" value="Orn_DAP_Arg_deC"/>
    <property type="match status" value="1"/>
</dbReference>
<dbReference type="PRINTS" id="PR01181">
    <property type="entry name" value="DAPDCRBXLASE"/>
</dbReference>
<dbReference type="PRINTS" id="PR01179">
    <property type="entry name" value="ODADCRBXLASE"/>
</dbReference>
<dbReference type="SUPFAM" id="SSF50621">
    <property type="entry name" value="Alanine racemase C-terminal domain-like"/>
    <property type="match status" value="1"/>
</dbReference>
<dbReference type="SUPFAM" id="SSF51419">
    <property type="entry name" value="PLP-binding barrel"/>
    <property type="match status" value="1"/>
</dbReference>
<reference key="1">
    <citation type="submission" date="1998-10" db="EMBL/GenBank/DDBJ databases">
        <authorList>
            <person name="Um H.W."/>
            <person name="Kang H.S."/>
        </authorList>
    </citation>
    <scope>NUCLEOTIDE SEQUENCE [GENOMIC DNA]</scope>
    <source>
        <strain>ATCC 31821 / ZM4 / CP4</strain>
    </source>
</reference>
<reference key="2">
    <citation type="journal article" date="2005" name="Nat. Biotechnol.">
        <title>The genome sequence of the ethanologenic bacterium Zymomonas mobilis ZM4.</title>
        <authorList>
            <person name="Seo J.-S."/>
            <person name="Chong H."/>
            <person name="Park H.S."/>
            <person name="Yoon K.-O."/>
            <person name="Jung C."/>
            <person name="Kim J.J."/>
            <person name="Hong J.H."/>
            <person name="Kim H."/>
            <person name="Kim J.-H."/>
            <person name="Kil J.-I."/>
            <person name="Park C.J."/>
            <person name="Oh H.-M."/>
            <person name="Lee J.-S."/>
            <person name="Jin S.-J."/>
            <person name="Um H.-W."/>
            <person name="Lee H.-J."/>
            <person name="Oh S.-J."/>
            <person name="Kim J.Y."/>
            <person name="Kang H.L."/>
            <person name="Lee S.Y."/>
            <person name="Lee K.J."/>
            <person name="Kang H.S."/>
        </authorList>
    </citation>
    <scope>NUCLEOTIDE SEQUENCE [LARGE SCALE GENOMIC DNA]</scope>
    <source>
        <strain>ATCC 31821 / ZM4 / CP4</strain>
    </source>
</reference>
<comment type="function">
    <text evidence="2">Specifically catalyzes the decarboxylation of meso-diaminopimelate (meso-DAP) to L-lysine.</text>
</comment>
<comment type="catalytic activity">
    <reaction evidence="2">
        <text>meso-2,6-diaminopimelate + H(+) = L-lysine + CO2</text>
        <dbReference type="Rhea" id="RHEA:15101"/>
        <dbReference type="ChEBI" id="CHEBI:15378"/>
        <dbReference type="ChEBI" id="CHEBI:16526"/>
        <dbReference type="ChEBI" id="CHEBI:32551"/>
        <dbReference type="ChEBI" id="CHEBI:57791"/>
        <dbReference type="EC" id="4.1.1.20"/>
    </reaction>
</comment>
<comment type="cofactor">
    <cofactor evidence="2">
        <name>pyridoxal 5'-phosphate</name>
        <dbReference type="ChEBI" id="CHEBI:597326"/>
    </cofactor>
</comment>
<comment type="pathway">
    <text evidence="2">Amino-acid biosynthesis; L-lysine biosynthesis via DAP pathway; L-lysine from DL-2,6-diaminopimelate: step 1/1.</text>
</comment>
<comment type="subunit">
    <text evidence="2">Homodimer.</text>
</comment>
<comment type="similarity">
    <text evidence="2">Belongs to the Orn/Lys/Arg decarboxylase class-II family. LysA subfamily.</text>
</comment>
<proteinExistence type="inferred from homology"/>